<keyword id="KW-0276">Fatty acid metabolism</keyword>
<keyword id="KW-0378">Hydrolase</keyword>
<keyword id="KW-0443">Lipid metabolism</keyword>
<keyword id="KW-0456">Lyase</keyword>
<keyword id="KW-1185">Reference proteome</keyword>
<evidence type="ECO:0000250" key="1">
    <source>
        <dbReference type="UniProtKB" id="B2HKM2"/>
    </source>
</evidence>
<evidence type="ECO:0000250" key="2">
    <source>
        <dbReference type="UniProtKB" id="P9WM67"/>
    </source>
</evidence>
<evidence type="ECO:0000305" key="3"/>
<accession>P9WM66</accession>
<accession>L0T4B3</accession>
<accession>P64685</accession>
<accession>Q10894</accession>
<name>INLPD_MYCTO</name>
<proteinExistence type="inferred from homology"/>
<sequence>MSHTDLTPCTRVLASSGTVPIAEELLARVLEPYSCKGCRYLIDAQYSATEDSVLAYGNFTIGESAYIRSTGHFNAVELILCFNQLAYSAFAPAVLNEEIRVLRGWSIDDYCQHQLSSMLIRKASSRFRKPLNPQKFSARLLCRDLQVIERTWRYLKVPCVIEFWDENGGAASGEIELAALNIP</sequence>
<gene>
    <name evidence="2" type="primary">fcoT</name>
    <name type="ordered locus">MT0107</name>
</gene>
<protein>
    <recommendedName>
        <fullName evidence="1">(2E)-enoyl-[ACP] glycyltransferase</fullName>
        <ecNumber evidence="1">4.3.2.11</ecNumber>
    </recommendedName>
    <alternativeName>
        <fullName evidence="1">(2E)-unsaturated fatty acyl-[ACP] glycyltransferase</fullName>
    </alternativeName>
    <alternativeName>
        <fullName evidence="2">Long-chain fatty acyl-CoA thioesterase FcoT</fullName>
        <ecNumber evidence="2">3.1.2.-</ecNumber>
    </alternativeName>
</protein>
<dbReference type="EC" id="4.3.2.11" evidence="1"/>
<dbReference type="EC" id="3.1.2.-" evidence="2"/>
<dbReference type="EMBL" id="AE000516">
    <property type="protein sequence ID" value="AAK44329.1"/>
    <property type="molecule type" value="Genomic_DNA"/>
</dbReference>
<dbReference type="PIR" id="B70751">
    <property type="entry name" value="B70751"/>
</dbReference>
<dbReference type="RefSeq" id="WP_003899810.1">
    <property type="nucleotide sequence ID" value="NZ_KK341227.1"/>
</dbReference>
<dbReference type="SMR" id="P9WM66"/>
<dbReference type="KEGG" id="mtc:MT0107"/>
<dbReference type="PATRIC" id="fig|83331.31.peg.112"/>
<dbReference type="HOGENOM" id="CLU_124481_0_0_11"/>
<dbReference type="Proteomes" id="UP000001020">
    <property type="component" value="Chromosome"/>
</dbReference>
<dbReference type="GO" id="GO:0047617">
    <property type="term" value="F:fatty acyl-CoA hydrolase activity"/>
    <property type="evidence" value="ECO:0007669"/>
    <property type="project" value="RHEA"/>
</dbReference>
<dbReference type="GO" id="GO:0016829">
    <property type="term" value="F:lyase activity"/>
    <property type="evidence" value="ECO:0007669"/>
    <property type="project" value="UniProtKB-KW"/>
</dbReference>
<dbReference type="GO" id="GO:0006631">
    <property type="term" value="P:fatty acid metabolic process"/>
    <property type="evidence" value="ECO:0007669"/>
    <property type="project" value="UniProtKB-KW"/>
</dbReference>
<dbReference type="Gene3D" id="3.10.129.30">
    <property type="entry name" value="Rv0098, thioesterase-like hot dog domain"/>
    <property type="match status" value="1"/>
</dbReference>
<dbReference type="InterPro" id="IPR022598">
    <property type="entry name" value="FcoT_ThioEstase"/>
</dbReference>
<dbReference type="InterPro" id="IPR043064">
    <property type="entry name" value="FcoT_ThioEstase_Rv0098-like_sf"/>
</dbReference>
<dbReference type="Pfam" id="PF10862">
    <property type="entry name" value="FcoT"/>
    <property type="match status" value="1"/>
</dbReference>
<comment type="function">
    <text evidence="1 2">Involved in the biosynthesis of a unique class of isonitrile lipopeptides (INLPs) that seem to function as virulence factors in M.tuberculosis and to play a role in metal acquisition (By similarity). Catalyzes a Michael addition of glycine to the beta-position of an alpha,beta-unsaturated fatty acyl-[ACP], producing a (3R)-3-[(carboxymethyl)amino]fatty acid. Acts on the (2E)-decenoyl moiety loaded on the acyl-carrier protein (ACP) MT0109, forming the product (3R)-3-[(carboxymethyl)amino]decanoate released from the ACP (By similarity). Displays thioesterase activity with a preference for long chain fatty acyl groups (By similarity).</text>
</comment>
<comment type="catalytic activity">
    <reaction evidence="1">
        <text>a (3R)-3-[(carboxymethyl)amino]fatty acid + holo-[ACP] + H(+) = a (2E)-enoyl-[ACP] + glycine + H2O</text>
        <dbReference type="Rhea" id="RHEA:74923"/>
        <dbReference type="Rhea" id="RHEA-COMP:9685"/>
        <dbReference type="Rhea" id="RHEA-COMP:9925"/>
        <dbReference type="ChEBI" id="CHEBI:15377"/>
        <dbReference type="ChEBI" id="CHEBI:15378"/>
        <dbReference type="ChEBI" id="CHEBI:57305"/>
        <dbReference type="ChEBI" id="CHEBI:64479"/>
        <dbReference type="ChEBI" id="CHEBI:78784"/>
        <dbReference type="ChEBI" id="CHEBI:193080"/>
        <dbReference type="EC" id="4.3.2.11"/>
    </reaction>
    <physiologicalReaction direction="right-to-left" evidence="1">
        <dbReference type="Rhea" id="RHEA:74925"/>
    </physiologicalReaction>
</comment>
<comment type="catalytic activity">
    <reaction evidence="1">
        <text>(3R)-3-[(carboxylmethyl)amino]decanoate + holo-[ACP] + H(+) = (2E)-decenoyl-[ACP] + glycine + H2O</text>
        <dbReference type="Rhea" id="RHEA:75543"/>
        <dbReference type="Rhea" id="RHEA-COMP:9639"/>
        <dbReference type="Rhea" id="RHEA-COMP:9685"/>
        <dbReference type="ChEBI" id="CHEBI:15377"/>
        <dbReference type="ChEBI" id="CHEBI:15378"/>
        <dbReference type="ChEBI" id="CHEBI:57305"/>
        <dbReference type="ChEBI" id="CHEBI:64479"/>
        <dbReference type="ChEBI" id="CHEBI:78467"/>
        <dbReference type="ChEBI" id="CHEBI:194341"/>
    </reaction>
    <physiologicalReaction direction="right-to-left" evidence="1">
        <dbReference type="Rhea" id="RHEA:75545"/>
    </physiologicalReaction>
</comment>
<comment type="catalytic activity">
    <reaction evidence="2">
        <text>a fatty acyl-CoA + H2O = a fatty acid + CoA + H(+)</text>
        <dbReference type="Rhea" id="RHEA:16781"/>
        <dbReference type="ChEBI" id="CHEBI:15377"/>
        <dbReference type="ChEBI" id="CHEBI:15378"/>
        <dbReference type="ChEBI" id="CHEBI:28868"/>
        <dbReference type="ChEBI" id="CHEBI:57287"/>
        <dbReference type="ChEBI" id="CHEBI:77636"/>
    </reaction>
</comment>
<comment type="similarity">
    <text evidence="3">Belongs to the FcoT family.</text>
</comment>
<feature type="chain" id="PRO_0000427357" description="(2E)-enoyl-[ACP] glycyltransferase">
    <location>
        <begin position="1"/>
        <end position="183"/>
    </location>
</feature>
<reference key="1">
    <citation type="journal article" date="2002" name="J. Bacteriol.">
        <title>Whole-genome comparison of Mycobacterium tuberculosis clinical and laboratory strains.</title>
        <authorList>
            <person name="Fleischmann R.D."/>
            <person name="Alland D."/>
            <person name="Eisen J.A."/>
            <person name="Carpenter L."/>
            <person name="White O."/>
            <person name="Peterson J.D."/>
            <person name="DeBoy R.T."/>
            <person name="Dodson R.J."/>
            <person name="Gwinn M.L."/>
            <person name="Haft D.H."/>
            <person name="Hickey E.K."/>
            <person name="Kolonay J.F."/>
            <person name="Nelson W.C."/>
            <person name="Umayam L.A."/>
            <person name="Ermolaeva M.D."/>
            <person name="Salzberg S.L."/>
            <person name="Delcher A."/>
            <person name="Utterback T.R."/>
            <person name="Weidman J.F."/>
            <person name="Khouri H.M."/>
            <person name="Gill J."/>
            <person name="Mikula A."/>
            <person name="Bishai W."/>
            <person name="Jacobs W.R. Jr."/>
            <person name="Venter J.C."/>
            <person name="Fraser C.M."/>
        </authorList>
    </citation>
    <scope>NUCLEOTIDE SEQUENCE [LARGE SCALE GENOMIC DNA]</scope>
    <source>
        <strain>CDC 1551 / Oshkosh</strain>
    </source>
</reference>
<organism>
    <name type="scientific">Mycobacterium tuberculosis (strain CDC 1551 / Oshkosh)</name>
    <dbReference type="NCBI Taxonomy" id="83331"/>
    <lineage>
        <taxon>Bacteria</taxon>
        <taxon>Bacillati</taxon>
        <taxon>Actinomycetota</taxon>
        <taxon>Actinomycetes</taxon>
        <taxon>Mycobacteriales</taxon>
        <taxon>Mycobacteriaceae</taxon>
        <taxon>Mycobacterium</taxon>
        <taxon>Mycobacterium tuberculosis complex</taxon>
    </lineage>
</organism>